<accession>Q06GM7</accession>
<evidence type="ECO:0000255" key="1">
    <source>
        <dbReference type="HAMAP-Rule" id="MF_01310"/>
    </source>
</evidence>
<evidence type="ECO:0000256" key="2">
    <source>
        <dbReference type="SAM" id="MobiDB-lite"/>
    </source>
</evidence>
<evidence type="ECO:0000305" key="3"/>
<sequence length="138" mass="14898">MTKPIPRIGSRRSGRIGSRKAGRRIPKGVIHVQASFNNTIVTVTDVRGRVVSWSSAGTCGFKGTRRGTPFAAQTAAGNAIRTVVDQGMQRAEVMIKGPGLGRDAALRAIRRSGLLLSFVRDVTPMPHNGCRPPKKRRV</sequence>
<geneLocation type="chloroplast"/>
<feature type="chain" id="PRO_0000276655" description="Small ribosomal subunit protein uS11c">
    <location>
        <begin position="1"/>
        <end position="138"/>
    </location>
</feature>
<feature type="region of interest" description="Disordered" evidence="2">
    <location>
        <begin position="1"/>
        <end position="22"/>
    </location>
</feature>
<feature type="compositionally biased region" description="Basic residues" evidence="2">
    <location>
        <begin position="9"/>
        <end position="22"/>
    </location>
</feature>
<reference key="1">
    <citation type="journal article" date="2006" name="BMC Evol. Biol.">
        <title>Complete plastid genome sequences of Drimys, Liriodendron, and Piper: implications for the phylogenetic relationships of magnoliids.</title>
        <authorList>
            <person name="Cai Z."/>
            <person name="Penaflor C."/>
            <person name="Kuehl J.V."/>
            <person name="Leebens-Mack J."/>
            <person name="Carlson J.E."/>
            <person name="dePamphilis C.W."/>
            <person name="Boore J.L."/>
            <person name="Jansen R.K."/>
        </authorList>
    </citation>
    <scope>NUCLEOTIDE SEQUENCE [LARGE SCALE GENOMIC DNA]</scope>
</reference>
<protein>
    <recommendedName>
        <fullName evidence="1">Small ribosomal subunit protein uS11c</fullName>
    </recommendedName>
    <alternativeName>
        <fullName evidence="3">30S ribosomal protein S11, chloroplastic</fullName>
    </alternativeName>
</protein>
<name>RR11_PIPCE</name>
<keyword id="KW-0150">Chloroplast</keyword>
<keyword id="KW-0934">Plastid</keyword>
<keyword id="KW-0687">Ribonucleoprotein</keyword>
<keyword id="KW-0689">Ribosomal protein</keyword>
<keyword id="KW-0694">RNA-binding</keyword>
<keyword id="KW-0699">rRNA-binding</keyword>
<gene>
    <name evidence="1" type="primary">rps11</name>
</gene>
<dbReference type="EMBL" id="DQ887677">
    <property type="protein sequence ID" value="ABI14504.1"/>
    <property type="molecule type" value="Genomic_DNA"/>
</dbReference>
<dbReference type="RefSeq" id="YP_784506.1">
    <property type="nucleotide sequence ID" value="NC_008457.1"/>
</dbReference>
<dbReference type="SMR" id="Q06GM7"/>
<dbReference type="GeneID" id="4363651"/>
<dbReference type="GO" id="GO:0009507">
    <property type="term" value="C:chloroplast"/>
    <property type="evidence" value="ECO:0007669"/>
    <property type="project" value="UniProtKB-SubCell"/>
</dbReference>
<dbReference type="GO" id="GO:1990904">
    <property type="term" value="C:ribonucleoprotein complex"/>
    <property type="evidence" value="ECO:0007669"/>
    <property type="project" value="UniProtKB-KW"/>
</dbReference>
<dbReference type="GO" id="GO:0005840">
    <property type="term" value="C:ribosome"/>
    <property type="evidence" value="ECO:0007669"/>
    <property type="project" value="UniProtKB-KW"/>
</dbReference>
<dbReference type="GO" id="GO:0019843">
    <property type="term" value="F:rRNA binding"/>
    <property type="evidence" value="ECO:0007669"/>
    <property type="project" value="UniProtKB-UniRule"/>
</dbReference>
<dbReference type="GO" id="GO:0003735">
    <property type="term" value="F:structural constituent of ribosome"/>
    <property type="evidence" value="ECO:0007669"/>
    <property type="project" value="InterPro"/>
</dbReference>
<dbReference type="GO" id="GO:0006412">
    <property type="term" value="P:translation"/>
    <property type="evidence" value="ECO:0007669"/>
    <property type="project" value="UniProtKB-UniRule"/>
</dbReference>
<dbReference type="FunFam" id="3.30.420.80:FF:000003">
    <property type="entry name" value="30S ribosomal protein S11, chloroplastic"/>
    <property type="match status" value="1"/>
</dbReference>
<dbReference type="Gene3D" id="3.30.420.80">
    <property type="entry name" value="Ribosomal protein S11"/>
    <property type="match status" value="1"/>
</dbReference>
<dbReference type="HAMAP" id="MF_01310">
    <property type="entry name" value="Ribosomal_uS11"/>
    <property type="match status" value="1"/>
</dbReference>
<dbReference type="InterPro" id="IPR001971">
    <property type="entry name" value="Ribosomal_uS11"/>
</dbReference>
<dbReference type="InterPro" id="IPR019981">
    <property type="entry name" value="Ribosomal_uS11_bac-type"/>
</dbReference>
<dbReference type="InterPro" id="IPR018102">
    <property type="entry name" value="Ribosomal_uS11_CS"/>
</dbReference>
<dbReference type="InterPro" id="IPR036967">
    <property type="entry name" value="Ribosomal_uS11_sf"/>
</dbReference>
<dbReference type="NCBIfam" id="NF003698">
    <property type="entry name" value="PRK05309.1"/>
    <property type="match status" value="1"/>
</dbReference>
<dbReference type="NCBIfam" id="TIGR03632">
    <property type="entry name" value="uS11_bact"/>
    <property type="match status" value="1"/>
</dbReference>
<dbReference type="PANTHER" id="PTHR11759">
    <property type="entry name" value="40S RIBOSOMAL PROTEIN S14/30S RIBOSOMAL PROTEIN S11"/>
    <property type="match status" value="1"/>
</dbReference>
<dbReference type="Pfam" id="PF00411">
    <property type="entry name" value="Ribosomal_S11"/>
    <property type="match status" value="1"/>
</dbReference>
<dbReference type="PIRSF" id="PIRSF002131">
    <property type="entry name" value="Ribosomal_S11"/>
    <property type="match status" value="1"/>
</dbReference>
<dbReference type="SUPFAM" id="SSF53137">
    <property type="entry name" value="Translational machinery components"/>
    <property type="match status" value="1"/>
</dbReference>
<dbReference type="PROSITE" id="PS00054">
    <property type="entry name" value="RIBOSOMAL_S11"/>
    <property type="match status" value="1"/>
</dbReference>
<comment type="subunit">
    <text evidence="1">Part of the 30S ribosomal subunit.</text>
</comment>
<comment type="subcellular location">
    <subcellularLocation>
        <location>Plastid</location>
        <location>Chloroplast</location>
    </subcellularLocation>
</comment>
<comment type="similarity">
    <text evidence="1">Belongs to the universal ribosomal protein uS11 family.</text>
</comment>
<organism>
    <name type="scientific">Piper cenocladum</name>
    <name type="common">Ant piper</name>
    <dbReference type="NCBI Taxonomy" id="398741"/>
    <lineage>
        <taxon>Eukaryota</taxon>
        <taxon>Viridiplantae</taxon>
        <taxon>Streptophyta</taxon>
        <taxon>Embryophyta</taxon>
        <taxon>Tracheophyta</taxon>
        <taxon>Spermatophyta</taxon>
        <taxon>Magnoliopsida</taxon>
        <taxon>Magnoliidae</taxon>
        <taxon>Piperales</taxon>
        <taxon>Piperaceae</taxon>
        <taxon>Piper</taxon>
    </lineage>
</organism>
<proteinExistence type="inferred from homology"/>